<reference key="1">
    <citation type="journal article" date="2008" name="BMC Genomics">
        <title>Comparative genomic analysis of the gut bacterium Bifidobacterium longum reveals loci susceptible to deletion during pure culture growth.</title>
        <authorList>
            <person name="Lee J.H."/>
            <person name="Karamychev V.N."/>
            <person name="Kozyavkin S.A."/>
            <person name="Mills D."/>
            <person name="Pavlov A.R."/>
            <person name="Pavlova N.V."/>
            <person name="Polouchine N.N."/>
            <person name="Richardson P.M."/>
            <person name="Shakhova V.V."/>
            <person name="Slesarev A.I."/>
            <person name="Weimer B."/>
            <person name="O'Sullivan D.J."/>
        </authorList>
    </citation>
    <scope>NUCLEOTIDE SEQUENCE [LARGE SCALE GENOMIC DNA]</scope>
    <source>
        <strain>DJO10A</strain>
    </source>
</reference>
<protein>
    <recommendedName>
        <fullName evidence="1">Large ribosomal subunit protein uL10</fullName>
    </recommendedName>
    <alternativeName>
        <fullName evidence="2">50S ribosomal protein L10</fullName>
    </alternativeName>
</protein>
<proteinExistence type="inferred from homology"/>
<dbReference type="EMBL" id="CP000605">
    <property type="protein sequence ID" value="ACD99112.1"/>
    <property type="molecule type" value="Genomic_DNA"/>
</dbReference>
<dbReference type="RefSeq" id="WP_007053001.1">
    <property type="nucleotide sequence ID" value="NZ_AABM02000021.1"/>
</dbReference>
<dbReference type="SMR" id="B3DPX3"/>
<dbReference type="GeneID" id="69578932"/>
<dbReference type="KEGG" id="blj:BLD_1667"/>
<dbReference type="HOGENOM" id="CLU_092227_1_0_11"/>
<dbReference type="Proteomes" id="UP000002419">
    <property type="component" value="Chromosome"/>
</dbReference>
<dbReference type="GO" id="GO:0015934">
    <property type="term" value="C:large ribosomal subunit"/>
    <property type="evidence" value="ECO:0007669"/>
    <property type="project" value="InterPro"/>
</dbReference>
<dbReference type="GO" id="GO:0070180">
    <property type="term" value="F:large ribosomal subunit rRNA binding"/>
    <property type="evidence" value="ECO:0007669"/>
    <property type="project" value="UniProtKB-UniRule"/>
</dbReference>
<dbReference type="GO" id="GO:0003735">
    <property type="term" value="F:structural constituent of ribosome"/>
    <property type="evidence" value="ECO:0007669"/>
    <property type="project" value="InterPro"/>
</dbReference>
<dbReference type="GO" id="GO:0006412">
    <property type="term" value="P:translation"/>
    <property type="evidence" value="ECO:0007669"/>
    <property type="project" value="UniProtKB-UniRule"/>
</dbReference>
<dbReference type="CDD" id="cd05797">
    <property type="entry name" value="Ribosomal_L10"/>
    <property type="match status" value="1"/>
</dbReference>
<dbReference type="Gene3D" id="3.30.70.1730">
    <property type="match status" value="1"/>
</dbReference>
<dbReference type="Gene3D" id="6.10.250.290">
    <property type="match status" value="1"/>
</dbReference>
<dbReference type="HAMAP" id="MF_00362">
    <property type="entry name" value="Ribosomal_uL10"/>
    <property type="match status" value="1"/>
</dbReference>
<dbReference type="InterPro" id="IPR001790">
    <property type="entry name" value="Ribosomal_uL10"/>
</dbReference>
<dbReference type="InterPro" id="IPR043141">
    <property type="entry name" value="Ribosomal_uL10-like_sf"/>
</dbReference>
<dbReference type="InterPro" id="IPR022973">
    <property type="entry name" value="Ribosomal_uL10_bac"/>
</dbReference>
<dbReference type="InterPro" id="IPR047865">
    <property type="entry name" value="Ribosomal_uL10_bac_type"/>
</dbReference>
<dbReference type="InterPro" id="IPR002363">
    <property type="entry name" value="Ribosomal_uL10_CS_bac"/>
</dbReference>
<dbReference type="NCBIfam" id="NF000955">
    <property type="entry name" value="PRK00099.1-1"/>
    <property type="match status" value="1"/>
</dbReference>
<dbReference type="PANTHER" id="PTHR11560">
    <property type="entry name" value="39S RIBOSOMAL PROTEIN L10, MITOCHONDRIAL"/>
    <property type="match status" value="1"/>
</dbReference>
<dbReference type="Pfam" id="PF00466">
    <property type="entry name" value="Ribosomal_L10"/>
    <property type="match status" value="1"/>
</dbReference>
<dbReference type="SUPFAM" id="SSF160369">
    <property type="entry name" value="Ribosomal protein L10-like"/>
    <property type="match status" value="1"/>
</dbReference>
<dbReference type="PROSITE" id="PS01109">
    <property type="entry name" value="RIBOSOMAL_L10"/>
    <property type="match status" value="1"/>
</dbReference>
<feature type="chain" id="PRO_1000120919" description="Large ribosomal subunit protein uL10">
    <location>
        <begin position="1"/>
        <end position="173"/>
    </location>
</feature>
<keyword id="KW-0687">Ribonucleoprotein</keyword>
<keyword id="KW-0689">Ribosomal protein</keyword>
<keyword id="KW-0694">RNA-binding</keyword>
<keyword id="KW-0699">rRNA-binding</keyword>
<sequence length="173" mass="18747">MKRPEKEAVVAQLTEEFRNADAVYLTEYRGLTVPQISDLREKLGRDTSYTVAKNTLARIAAKEAGIEGLDEILSGPTAITFVKGDFIEAAKVIRDFAKDNKALVIKGAAADGTVYDAEGAKKLADLKSRPQLLAEFAGDIKASMAKAAYLFNALPTKAVRTIDALREKQEKAA</sequence>
<organism>
    <name type="scientific">Bifidobacterium longum (strain DJO10A)</name>
    <dbReference type="NCBI Taxonomy" id="205913"/>
    <lineage>
        <taxon>Bacteria</taxon>
        <taxon>Bacillati</taxon>
        <taxon>Actinomycetota</taxon>
        <taxon>Actinomycetes</taxon>
        <taxon>Bifidobacteriales</taxon>
        <taxon>Bifidobacteriaceae</taxon>
        <taxon>Bifidobacterium</taxon>
    </lineage>
</organism>
<evidence type="ECO:0000255" key="1">
    <source>
        <dbReference type="HAMAP-Rule" id="MF_00362"/>
    </source>
</evidence>
<evidence type="ECO:0000305" key="2"/>
<accession>B3DPX3</accession>
<comment type="function">
    <text evidence="1">Forms part of the ribosomal stalk, playing a central role in the interaction of the ribosome with GTP-bound translation factors.</text>
</comment>
<comment type="subunit">
    <text evidence="1">Part of the ribosomal stalk of the 50S ribosomal subunit. The N-terminus interacts with L11 and the large rRNA to form the base of the stalk. The C-terminus forms an elongated spine to which L12 dimers bind in a sequential fashion forming a multimeric L10(L12)X complex.</text>
</comment>
<comment type="similarity">
    <text evidence="1">Belongs to the universal ribosomal protein uL10 family.</text>
</comment>
<gene>
    <name evidence="1" type="primary">rplJ</name>
    <name type="ordered locus">BLD_1667</name>
</gene>
<name>RL10_BIFLD</name>